<gene>
    <name type="primary">Zkscan3</name>
    <name type="synonym">Skz1</name>
    <name type="synonym">Zfp306</name>
    <name type="synonym">Zfp307</name>
    <name type="synonym">Zfp47</name>
</gene>
<sequence>MARESRESTTLDSHSAEDQMELLVIKVEQEESSPLAEETSWLGSPGPDRSRQRFRAFRYPEAAGPRQALSRLRELCRQWLRPDMHSKEQILELLVLEQFLTILPGELQAWVREQHPDSGEEVVALLEYLDRQLDDTPPQVPDDDDGQELLCSKAVLLTSAQGSESSQMEPVEPLLKQESLGSLPSEVRVTHVGHCGEDGVTATRLTSELQGLLKMEDVAPVLSPRWTEQDSSQMNLYKDGMQEHSGSLVSLDQDMQTKVRDLPRAEEYRDQKPEQTVCFLGEDTVPIPTGAEASEQEGKLQAAQKSATGTRRFYCRECGKSFAQSSGLSKHKRIHTGLKPYECEECGKAFIGSSALIIHQRVHTGEKPYECEECGKAFSHSSDLIKHQRTHTGEKPYECDDCGKTFTQSCSLLEHHRIHTGEKPYQCNMCPKAFRRSSHLLRHQRTHTGDKDFFVPEPYWESQSRVESHWENIETPVSYQCNDCERSFSRITSLIEHQKVHTGEKPFECQTCGKGFTRPSYLIQHQRRHTGKKTSVTVTPAVHSEVGVQLSLN</sequence>
<proteinExistence type="evidence at protein level"/>
<comment type="function">
    <text evidence="1">Transcriptional factor that binds to the consensus sequence 5'-[GT][AG][AGT]GGGG-3' and acts as a repressor of autophagy. Specifically represses expression of genes involved in autophagy and lysosome biogenesis/function such as MAP1LC3B, ULK1 or WIPI2. Associates with chromatin at the ITGB4 and VEGF promoters (By similarity).</text>
</comment>
<comment type="subcellular location">
    <subcellularLocation>
        <location evidence="4">Nucleus</location>
    </subcellularLocation>
    <subcellularLocation>
        <location evidence="1">Cytoplasm</location>
    </subcellularLocation>
    <text evidence="1">Mainly localizes in the nucleus. Under starvation conditions translocates to the cytoplasm, allowing expression of target genes involved in autophagy and lysosome biogenesis/function (By similarity).</text>
</comment>
<comment type="tissue specificity">
    <text evidence="6">Expressed in heart, brain, spleen, lung, liver, skeletal muscle, kidney and testis.</text>
</comment>
<comment type="similarity">
    <text evidence="7">Belongs to the krueppel C2H2-type zinc-finger protein family.</text>
</comment>
<comment type="sequence caution" evidence="7">
    <conflict type="frameshift">
        <sequence resource="EMBL-CDS" id="AAG00602"/>
    </conflict>
</comment>
<organism>
    <name type="scientific">Mus musculus</name>
    <name type="common">Mouse</name>
    <dbReference type="NCBI Taxonomy" id="10090"/>
    <lineage>
        <taxon>Eukaryota</taxon>
        <taxon>Metazoa</taxon>
        <taxon>Chordata</taxon>
        <taxon>Craniata</taxon>
        <taxon>Vertebrata</taxon>
        <taxon>Euteleostomi</taxon>
        <taxon>Mammalia</taxon>
        <taxon>Eutheria</taxon>
        <taxon>Euarchontoglires</taxon>
        <taxon>Glires</taxon>
        <taxon>Rodentia</taxon>
        <taxon>Myomorpha</taxon>
        <taxon>Muroidea</taxon>
        <taxon>Muridae</taxon>
        <taxon>Murinae</taxon>
        <taxon>Mus</taxon>
        <taxon>Mus</taxon>
    </lineage>
</organism>
<reference key="1">
    <citation type="journal article" date="2001" name="Biochim. Biophys. Acta">
        <title>Identification of SCAN dimerization domains in four gene families.</title>
        <authorList>
            <person name="Honer C."/>
            <person name="Chen P."/>
            <person name="Toth M.J."/>
            <person name="Schumacher C."/>
        </authorList>
    </citation>
    <scope>NUCLEOTIDE SEQUENCE [MRNA]</scope>
    <scope>TISSUE SPECIFICITY</scope>
    <source>
        <strain>CD-1</strain>
    </source>
</reference>
<reference key="2">
    <citation type="journal article" date="2005" name="Science">
        <title>The transcriptional landscape of the mammalian genome.</title>
        <authorList>
            <person name="Carninci P."/>
            <person name="Kasukawa T."/>
            <person name="Katayama S."/>
            <person name="Gough J."/>
            <person name="Frith M.C."/>
            <person name="Maeda N."/>
            <person name="Oyama R."/>
            <person name="Ravasi T."/>
            <person name="Lenhard B."/>
            <person name="Wells C."/>
            <person name="Kodzius R."/>
            <person name="Shimokawa K."/>
            <person name="Bajic V.B."/>
            <person name="Brenner S.E."/>
            <person name="Batalov S."/>
            <person name="Forrest A.R."/>
            <person name="Zavolan M."/>
            <person name="Davis M.J."/>
            <person name="Wilming L.G."/>
            <person name="Aidinis V."/>
            <person name="Allen J.E."/>
            <person name="Ambesi-Impiombato A."/>
            <person name="Apweiler R."/>
            <person name="Aturaliya R.N."/>
            <person name="Bailey T.L."/>
            <person name="Bansal M."/>
            <person name="Baxter L."/>
            <person name="Beisel K.W."/>
            <person name="Bersano T."/>
            <person name="Bono H."/>
            <person name="Chalk A.M."/>
            <person name="Chiu K.P."/>
            <person name="Choudhary V."/>
            <person name="Christoffels A."/>
            <person name="Clutterbuck D.R."/>
            <person name="Crowe M.L."/>
            <person name="Dalla E."/>
            <person name="Dalrymple B.P."/>
            <person name="de Bono B."/>
            <person name="Della Gatta G."/>
            <person name="di Bernardo D."/>
            <person name="Down T."/>
            <person name="Engstrom P."/>
            <person name="Fagiolini M."/>
            <person name="Faulkner G."/>
            <person name="Fletcher C.F."/>
            <person name="Fukushima T."/>
            <person name="Furuno M."/>
            <person name="Futaki S."/>
            <person name="Gariboldi M."/>
            <person name="Georgii-Hemming P."/>
            <person name="Gingeras T.R."/>
            <person name="Gojobori T."/>
            <person name="Green R.E."/>
            <person name="Gustincich S."/>
            <person name="Harbers M."/>
            <person name="Hayashi Y."/>
            <person name="Hensch T.K."/>
            <person name="Hirokawa N."/>
            <person name="Hill D."/>
            <person name="Huminiecki L."/>
            <person name="Iacono M."/>
            <person name="Ikeo K."/>
            <person name="Iwama A."/>
            <person name="Ishikawa T."/>
            <person name="Jakt M."/>
            <person name="Kanapin A."/>
            <person name="Katoh M."/>
            <person name="Kawasawa Y."/>
            <person name="Kelso J."/>
            <person name="Kitamura H."/>
            <person name="Kitano H."/>
            <person name="Kollias G."/>
            <person name="Krishnan S.P."/>
            <person name="Kruger A."/>
            <person name="Kummerfeld S.K."/>
            <person name="Kurochkin I.V."/>
            <person name="Lareau L.F."/>
            <person name="Lazarevic D."/>
            <person name="Lipovich L."/>
            <person name="Liu J."/>
            <person name="Liuni S."/>
            <person name="McWilliam S."/>
            <person name="Madan Babu M."/>
            <person name="Madera M."/>
            <person name="Marchionni L."/>
            <person name="Matsuda H."/>
            <person name="Matsuzawa S."/>
            <person name="Miki H."/>
            <person name="Mignone F."/>
            <person name="Miyake S."/>
            <person name="Morris K."/>
            <person name="Mottagui-Tabar S."/>
            <person name="Mulder N."/>
            <person name="Nakano N."/>
            <person name="Nakauchi H."/>
            <person name="Ng P."/>
            <person name="Nilsson R."/>
            <person name="Nishiguchi S."/>
            <person name="Nishikawa S."/>
            <person name="Nori F."/>
            <person name="Ohara O."/>
            <person name="Okazaki Y."/>
            <person name="Orlando V."/>
            <person name="Pang K.C."/>
            <person name="Pavan W.J."/>
            <person name="Pavesi G."/>
            <person name="Pesole G."/>
            <person name="Petrovsky N."/>
            <person name="Piazza S."/>
            <person name="Reed J."/>
            <person name="Reid J.F."/>
            <person name="Ring B.Z."/>
            <person name="Ringwald M."/>
            <person name="Rost B."/>
            <person name="Ruan Y."/>
            <person name="Salzberg S.L."/>
            <person name="Sandelin A."/>
            <person name="Schneider C."/>
            <person name="Schoenbach C."/>
            <person name="Sekiguchi K."/>
            <person name="Semple C.A."/>
            <person name="Seno S."/>
            <person name="Sessa L."/>
            <person name="Sheng Y."/>
            <person name="Shibata Y."/>
            <person name="Shimada H."/>
            <person name="Shimada K."/>
            <person name="Silva D."/>
            <person name="Sinclair B."/>
            <person name="Sperling S."/>
            <person name="Stupka E."/>
            <person name="Sugiura K."/>
            <person name="Sultana R."/>
            <person name="Takenaka Y."/>
            <person name="Taki K."/>
            <person name="Tammoja K."/>
            <person name="Tan S.L."/>
            <person name="Tang S."/>
            <person name="Taylor M.S."/>
            <person name="Tegner J."/>
            <person name="Teichmann S.A."/>
            <person name="Ueda H.R."/>
            <person name="van Nimwegen E."/>
            <person name="Verardo R."/>
            <person name="Wei C.L."/>
            <person name="Yagi K."/>
            <person name="Yamanishi H."/>
            <person name="Zabarovsky E."/>
            <person name="Zhu S."/>
            <person name="Zimmer A."/>
            <person name="Hide W."/>
            <person name="Bult C."/>
            <person name="Grimmond S.M."/>
            <person name="Teasdale R.D."/>
            <person name="Liu E.T."/>
            <person name="Brusic V."/>
            <person name="Quackenbush J."/>
            <person name="Wahlestedt C."/>
            <person name="Mattick J.S."/>
            <person name="Hume D.A."/>
            <person name="Kai C."/>
            <person name="Sasaki D."/>
            <person name="Tomaru Y."/>
            <person name="Fukuda S."/>
            <person name="Kanamori-Katayama M."/>
            <person name="Suzuki M."/>
            <person name="Aoki J."/>
            <person name="Arakawa T."/>
            <person name="Iida J."/>
            <person name="Imamura K."/>
            <person name="Itoh M."/>
            <person name="Kato T."/>
            <person name="Kawaji H."/>
            <person name="Kawagashira N."/>
            <person name="Kawashima T."/>
            <person name="Kojima M."/>
            <person name="Kondo S."/>
            <person name="Konno H."/>
            <person name="Nakano K."/>
            <person name="Ninomiya N."/>
            <person name="Nishio T."/>
            <person name="Okada M."/>
            <person name="Plessy C."/>
            <person name="Shibata K."/>
            <person name="Shiraki T."/>
            <person name="Suzuki S."/>
            <person name="Tagami M."/>
            <person name="Waki K."/>
            <person name="Watahiki A."/>
            <person name="Okamura-Oho Y."/>
            <person name="Suzuki H."/>
            <person name="Kawai J."/>
            <person name="Hayashizaki Y."/>
        </authorList>
    </citation>
    <scope>NUCLEOTIDE SEQUENCE [LARGE SCALE MRNA]</scope>
    <source>
        <strain>C57BL/6J</strain>
        <tissue>Skin</tissue>
        <tissue>Testis</tissue>
    </source>
</reference>
<reference key="3">
    <citation type="submission" date="2005-09" db="EMBL/GenBank/DDBJ databases">
        <authorList>
            <person name="Mural R.J."/>
            <person name="Adams M.D."/>
            <person name="Myers E.W."/>
            <person name="Smith H.O."/>
            <person name="Venter J.C."/>
        </authorList>
    </citation>
    <scope>NUCLEOTIDE SEQUENCE [LARGE SCALE GENOMIC DNA]</scope>
</reference>
<reference key="4">
    <citation type="journal article" date="2004" name="Genome Res.">
        <title>The status, quality, and expansion of the NIH full-length cDNA project: the Mammalian Gene Collection (MGC).</title>
        <authorList>
            <consortium name="The MGC Project Team"/>
        </authorList>
    </citation>
    <scope>NUCLEOTIDE SEQUENCE [LARGE SCALE MRNA]</scope>
    <source>
        <tissue>Mammary tumor</tissue>
    </source>
</reference>
<reference key="5">
    <citation type="journal article" date="2010" name="Cell">
        <title>A tissue-specific atlas of mouse protein phosphorylation and expression.</title>
        <authorList>
            <person name="Huttlin E.L."/>
            <person name="Jedrychowski M.P."/>
            <person name="Elias J.E."/>
            <person name="Goswami T."/>
            <person name="Rad R."/>
            <person name="Beausoleil S.A."/>
            <person name="Villen J."/>
            <person name="Haas W."/>
            <person name="Sowa M.E."/>
            <person name="Gygi S.P."/>
        </authorList>
    </citation>
    <scope>PHOSPHORYLATION [LARGE SCALE ANALYSIS] AT SER-33; SER-44; THR-136 AND SER-223</scope>
    <scope>IDENTIFICATION BY MASS SPECTROMETRY [LARGE SCALE ANALYSIS]</scope>
    <source>
        <tissue>Spleen</tissue>
    </source>
</reference>
<evidence type="ECO:0000250" key="1"/>
<evidence type="ECO:0000250" key="2">
    <source>
        <dbReference type="UniProtKB" id="Q9BRR0"/>
    </source>
</evidence>
<evidence type="ECO:0000255" key="3">
    <source>
        <dbReference type="PROSITE-ProRule" id="PRU00042"/>
    </source>
</evidence>
<evidence type="ECO:0000255" key="4">
    <source>
        <dbReference type="PROSITE-ProRule" id="PRU00187"/>
    </source>
</evidence>
<evidence type="ECO:0000256" key="5">
    <source>
        <dbReference type="SAM" id="MobiDB-lite"/>
    </source>
</evidence>
<evidence type="ECO:0000269" key="6">
    <source>
    </source>
</evidence>
<evidence type="ECO:0000305" key="7"/>
<evidence type="ECO:0007744" key="8">
    <source>
    </source>
</evidence>
<accession>Q91VW9</accession>
<accession>Q3V3Z2</accession>
<accession>Q8CD81</accession>
<accession>Q9ESY5</accession>
<dbReference type="EMBL" id="AF291722">
    <property type="protein sequence ID" value="AAG00602.1"/>
    <property type="status" value="ALT_FRAME"/>
    <property type="molecule type" value="mRNA"/>
</dbReference>
<dbReference type="EMBL" id="AK028902">
    <property type="protein sequence ID" value="BAE20446.1"/>
    <property type="molecule type" value="mRNA"/>
</dbReference>
<dbReference type="EMBL" id="AK031286">
    <property type="protein sequence ID" value="BAC27333.1"/>
    <property type="molecule type" value="mRNA"/>
</dbReference>
<dbReference type="EMBL" id="CH466561">
    <property type="protein sequence ID" value="EDL32657.1"/>
    <property type="molecule type" value="Genomic_DNA"/>
</dbReference>
<dbReference type="EMBL" id="CH466561">
    <property type="protein sequence ID" value="EDL32658.1"/>
    <property type="molecule type" value="Genomic_DNA"/>
</dbReference>
<dbReference type="EMBL" id="CH466561">
    <property type="protein sequence ID" value="EDL32661.1"/>
    <property type="molecule type" value="Genomic_DNA"/>
</dbReference>
<dbReference type="EMBL" id="BC007473">
    <property type="protein sequence ID" value="AAH07473.1"/>
    <property type="molecule type" value="mRNA"/>
</dbReference>
<dbReference type="CCDS" id="CCDS26274.1"/>
<dbReference type="RefSeq" id="NP_001139250.1">
    <property type="nucleotide sequence ID" value="NM_001145778.1"/>
</dbReference>
<dbReference type="RefSeq" id="NP_076174.3">
    <property type="nucleotide sequence ID" value="NM_023685.4"/>
</dbReference>
<dbReference type="RefSeq" id="XP_006516852.1">
    <property type="nucleotide sequence ID" value="XM_006516789.3"/>
</dbReference>
<dbReference type="RefSeq" id="XP_006516853.1">
    <property type="nucleotide sequence ID" value="XM_006516790.3"/>
</dbReference>
<dbReference type="SMR" id="Q91VW9"/>
<dbReference type="BioGRID" id="215542">
    <property type="interactions" value="1"/>
</dbReference>
<dbReference type="FunCoup" id="Q91VW9">
    <property type="interactions" value="1146"/>
</dbReference>
<dbReference type="STRING" id="10090.ENSMUSP00000112135"/>
<dbReference type="GlyGen" id="Q91VW9">
    <property type="glycosylation" value="1 site"/>
</dbReference>
<dbReference type="iPTMnet" id="Q91VW9"/>
<dbReference type="PhosphoSitePlus" id="Q91VW9"/>
<dbReference type="jPOST" id="Q91VW9"/>
<dbReference type="PaxDb" id="10090-ENSMUSP00000068424"/>
<dbReference type="ProteomicsDB" id="274993"/>
<dbReference type="DNASU" id="72739"/>
<dbReference type="GeneID" id="72739"/>
<dbReference type="KEGG" id="mmu:72739"/>
<dbReference type="UCSC" id="uc007pqg.2">
    <property type="organism name" value="mouse"/>
</dbReference>
<dbReference type="AGR" id="MGI:1919989"/>
<dbReference type="CTD" id="80317"/>
<dbReference type="MGI" id="MGI:1919989">
    <property type="gene designation" value="Zkscan3"/>
</dbReference>
<dbReference type="eggNOG" id="KOG1721">
    <property type="taxonomic scope" value="Eukaryota"/>
</dbReference>
<dbReference type="InParanoid" id="Q91VW9"/>
<dbReference type="OrthoDB" id="654211at2759"/>
<dbReference type="PhylomeDB" id="Q91VW9"/>
<dbReference type="TreeFam" id="TF350830"/>
<dbReference type="Reactome" id="R-MMU-212436">
    <property type="pathway name" value="Generic Transcription Pathway"/>
</dbReference>
<dbReference type="BioGRID-ORCS" id="72739">
    <property type="hits" value="4 hits in 77 CRISPR screens"/>
</dbReference>
<dbReference type="ChiTaRS" id="Zkscan3">
    <property type="organism name" value="mouse"/>
</dbReference>
<dbReference type="PRO" id="PR:Q91VW9"/>
<dbReference type="Proteomes" id="UP000000589">
    <property type="component" value="Unplaced"/>
</dbReference>
<dbReference type="RNAct" id="Q91VW9">
    <property type="molecule type" value="protein"/>
</dbReference>
<dbReference type="GO" id="GO:0005737">
    <property type="term" value="C:cytoplasm"/>
    <property type="evidence" value="ECO:0000250"/>
    <property type="project" value="UniProtKB"/>
</dbReference>
<dbReference type="GO" id="GO:0005634">
    <property type="term" value="C:nucleus"/>
    <property type="evidence" value="ECO:0000250"/>
    <property type="project" value="UniProtKB"/>
</dbReference>
<dbReference type="GO" id="GO:0003682">
    <property type="term" value="F:chromatin binding"/>
    <property type="evidence" value="ECO:0000250"/>
    <property type="project" value="UniProtKB"/>
</dbReference>
<dbReference type="GO" id="GO:0003677">
    <property type="term" value="F:DNA binding"/>
    <property type="evidence" value="ECO:0000250"/>
    <property type="project" value="UniProtKB"/>
</dbReference>
<dbReference type="GO" id="GO:0003700">
    <property type="term" value="F:DNA-binding transcription factor activity"/>
    <property type="evidence" value="ECO:0000250"/>
    <property type="project" value="UniProtKB"/>
</dbReference>
<dbReference type="GO" id="GO:0043565">
    <property type="term" value="F:sequence-specific DNA binding"/>
    <property type="evidence" value="ECO:0000250"/>
    <property type="project" value="UniProtKB"/>
</dbReference>
<dbReference type="GO" id="GO:0008270">
    <property type="term" value="F:zinc ion binding"/>
    <property type="evidence" value="ECO:0007669"/>
    <property type="project" value="UniProtKB-KW"/>
</dbReference>
<dbReference type="GO" id="GO:0006914">
    <property type="term" value="P:autophagy"/>
    <property type="evidence" value="ECO:0007669"/>
    <property type="project" value="UniProtKB-KW"/>
</dbReference>
<dbReference type="GO" id="GO:0007040">
    <property type="term" value="P:lysosome organization"/>
    <property type="evidence" value="ECO:0000250"/>
    <property type="project" value="UniProtKB"/>
</dbReference>
<dbReference type="GO" id="GO:0010507">
    <property type="term" value="P:negative regulation of autophagy"/>
    <property type="evidence" value="ECO:0000250"/>
    <property type="project" value="UniProtKB"/>
</dbReference>
<dbReference type="GO" id="GO:2000773">
    <property type="term" value="P:negative regulation of cellular senescence"/>
    <property type="evidence" value="ECO:0000250"/>
    <property type="project" value="UniProtKB"/>
</dbReference>
<dbReference type="GO" id="GO:0045892">
    <property type="term" value="P:negative regulation of DNA-templated transcription"/>
    <property type="evidence" value="ECO:0000250"/>
    <property type="project" value="UniProtKB"/>
</dbReference>
<dbReference type="GO" id="GO:0045893">
    <property type="term" value="P:positive regulation of DNA-templated transcription"/>
    <property type="evidence" value="ECO:0000250"/>
    <property type="project" value="UniProtKB"/>
</dbReference>
<dbReference type="CDD" id="cd07936">
    <property type="entry name" value="SCAN"/>
    <property type="match status" value="1"/>
</dbReference>
<dbReference type="FunFam" id="3.30.160.60:FF:000295">
    <property type="entry name" value="zinc finger protein 19"/>
    <property type="match status" value="1"/>
</dbReference>
<dbReference type="FunFam" id="1.10.4020.10:FF:000001">
    <property type="entry name" value="zinc finger protein 263 isoform X1"/>
    <property type="match status" value="1"/>
</dbReference>
<dbReference type="FunFam" id="3.30.160.60:FF:000608">
    <property type="entry name" value="zinc finger protein 286A isoform X1"/>
    <property type="match status" value="1"/>
</dbReference>
<dbReference type="FunFam" id="3.30.160.60:FF:000352">
    <property type="entry name" value="zinc finger protein 3 homolog"/>
    <property type="match status" value="1"/>
</dbReference>
<dbReference type="FunFam" id="3.30.160.60:FF:000384">
    <property type="entry name" value="Zinc finger protein 550"/>
    <property type="match status" value="1"/>
</dbReference>
<dbReference type="FunFam" id="3.30.160.60:FF:000642">
    <property type="entry name" value="Zinc finger with KRAB and SCAN domains 2"/>
    <property type="match status" value="1"/>
</dbReference>
<dbReference type="FunFam" id="3.30.160.60:FF:000057">
    <property type="entry name" value="Zinc finger with KRAB and SCAN domains 4"/>
    <property type="match status" value="1"/>
</dbReference>
<dbReference type="FunFam" id="3.30.160.60:FF:001333">
    <property type="entry name" value="Zinc finger with KRAB and SCAN domains 4"/>
    <property type="match status" value="1"/>
</dbReference>
<dbReference type="Gene3D" id="6.10.140.140">
    <property type="match status" value="1"/>
</dbReference>
<dbReference type="Gene3D" id="3.30.160.60">
    <property type="entry name" value="Classic Zinc Finger"/>
    <property type="match status" value="7"/>
</dbReference>
<dbReference type="Gene3D" id="1.10.4020.10">
    <property type="entry name" value="DNA breaking-rejoining enzymes"/>
    <property type="match status" value="1"/>
</dbReference>
<dbReference type="InterPro" id="IPR001909">
    <property type="entry name" value="KRAB"/>
</dbReference>
<dbReference type="InterPro" id="IPR036051">
    <property type="entry name" value="KRAB_dom_sf"/>
</dbReference>
<dbReference type="InterPro" id="IPR003309">
    <property type="entry name" value="SCAN_dom"/>
</dbReference>
<dbReference type="InterPro" id="IPR038269">
    <property type="entry name" value="SCAN_sf"/>
</dbReference>
<dbReference type="InterPro" id="IPR036236">
    <property type="entry name" value="Znf_C2H2_sf"/>
</dbReference>
<dbReference type="InterPro" id="IPR013087">
    <property type="entry name" value="Znf_C2H2_type"/>
</dbReference>
<dbReference type="PANTHER" id="PTHR24393">
    <property type="entry name" value="ZINC FINGER PROTEIN"/>
    <property type="match status" value="1"/>
</dbReference>
<dbReference type="PANTHER" id="PTHR24393:SF100">
    <property type="entry name" value="ZINC FINGER PROTEIN-RELATED"/>
    <property type="match status" value="1"/>
</dbReference>
<dbReference type="Pfam" id="PF01352">
    <property type="entry name" value="KRAB"/>
    <property type="match status" value="1"/>
</dbReference>
<dbReference type="Pfam" id="PF02023">
    <property type="entry name" value="SCAN"/>
    <property type="match status" value="1"/>
</dbReference>
<dbReference type="Pfam" id="PF00096">
    <property type="entry name" value="zf-C2H2"/>
    <property type="match status" value="7"/>
</dbReference>
<dbReference type="SMART" id="SM00349">
    <property type="entry name" value="KRAB"/>
    <property type="match status" value="1"/>
</dbReference>
<dbReference type="SMART" id="SM00431">
    <property type="entry name" value="SCAN"/>
    <property type="match status" value="1"/>
</dbReference>
<dbReference type="SMART" id="SM00355">
    <property type="entry name" value="ZnF_C2H2"/>
    <property type="match status" value="7"/>
</dbReference>
<dbReference type="SUPFAM" id="SSF57667">
    <property type="entry name" value="beta-beta-alpha zinc fingers"/>
    <property type="match status" value="4"/>
</dbReference>
<dbReference type="SUPFAM" id="SSF109640">
    <property type="entry name" value="KRAB domain (Kruppel-associated box)"/>
    <property type="match status" value="1"/>
</dbReference>
<dbReference type="SUPFAM" id="SSF47353">
    <property type="entry name" value="Retrovirus capsid dimerization domain-like"/>
    <property type="match status" value="1"/>
</dbReference>
<dbReference type="PROSITE" id="PS50804">
    <property type="entry name" value="SCAN_BOX"/>
    <property type="match status" value="1"/>
</dbReference>
<dbReference type="PROSITE" id="PS00028">
    <property type="entry name" value="ZINC_FINGER_C2H2_1"/>
    <property type="match status" value="7"/>
</dbReference>
<dbReference type="PROSITE" id="PS50157">
    <property type="entry name" value="ZINC_FINGER_C2H2_2"/>
    <property type="match status" value="7"/>
</dbReference>
<name>ZKSC3_MOUSE</name>
<protein>
    <recommendedName>
        <fullName>Zinc finger protein with KRAB and SCAN domains 3</fullName>
    </recommendedName>
    <alternativeName>
        <fullName>SCAN-KRAB-zinc finger protein</fullName>
    </alternativeName>
    <alternativeName>
        <fullName>Zinc finger protein 306</fullName>
    </alternativeName>
    <alternativeName>
        <fullName>Zinc finger protein 307</fullName>
    </alternativeName>
    <alternativeName>
        <fullName>Zinc finger protein 47 homolog</fullName>
        <shortName>Zf47</shortName>
        <shortName>Zfp-47</shortName>
    </alternativeName>
</protein>
<feature type="chain" id="PRO_0000394861" description="Zinc finger protein with KRAB and SCAN domains 3">
    <location>
        <begin position="1"/>
        <end position="553"/>
    </location>
</feature>
<feature type="domain" description="SCAN box" evidence="4">
    <location>
        <begin position="51"/>
        <end position="133"/>
    </location>
</feature>
<feature type="domain" description="KRAB">
    <location>
        <begin position="213"/>
        <end position="273"/>
    </location>
</feature>
<feature type="zinc finger region" description="C2H2-type 1" evidence="3">
    <location>
        <begin position="313"/>
        <end position="335"/>
    </location>
</feature>
<feature type="zinc finger region" description="C2H2-type 2" evidence="3">
    <location>
        <begin position="341"/>
        <end position="363"/>
    </location>
</feature>
<feature type="zinc finger region" description="C2H2-type 3" evidence="3">
    <location>
        <begin position="369"/>
        <end position="391"/>
    </location>
</feature>
<feature type="zinc finger region" description="C2H2-type 4" evidence="3">
    <location>
        <begin position="397"/>
        <end position="419"/>
    </location>
</feature>
<feature type="zinc finger region" description="C2H2-type 5" evidence="3">
    <location>
        <begin position="425"/>
        <end position="447"/>
    </location>
</feature>
<feature type="zinc finger region" description="C2H2-type 6" evidence="3">
    <location>
        <begin position="479"/>
        <end position="501"/>
    </location>
</feature>
<feature type="zinc finger region" description="C2H2-type 7" evidence="3">
    <location>
        <begin position="507"/>
        <end position="529"/>
    </location>
</feature>
<feature type="region of interest" description="Disordered" evidence="5">
    <location>
        <begin position="28"/>
        <end position="49"/>
    </location>
</feature>
<feature type="modified residue" description="Phosphoserine" evidence="8">
    <location>
        <position position="33"/>
    </location>
</feature>
<feature type="modified residue" description="Phosphoserine" evidence="8">
    <location>
        <position position="44"/>
    </location>
</feature>
<feature type="modified residue" description="Phosphothreonine" evidence="8">
    <location>
        <position position="136"/>
    </location>
</feature>
<feature type="modified residue" description="Phosphothreonine" evidence="2">
    <location>
        <position position="206"/>
    </location>
</feature>
<feature type="modified residue" description="Phosphoserine" evidence="8">
    <location>
        <position position="223"/>
    </location>
</feature>
<feature type="modified residue" description="Phosphothreonine" evidence="2">
    <location>
        <position position="448"/>
    </location>
</feature>
<feature type="cross-link" description="Glycyl lysine isopeptide (Lys-Gly) (interchain with G-Cter in SUMO2)" evidence="2">
    <location>
        <position position="176"/>
    </location>
</feature>
<feature type="sequence conflict" description="In Ref. 2; BAC27333/BAE20446." evidence="7" ref="2">
    <original>S</original>
    <variation>A</variation>
    <location>
        <position position="32"/>
    </location>
</feature>
<feature type="sequence conflict" description="In Ref. 1; AAG00602." evidence="7" ref="1">
    <original>A</original>
    <variation>T</variation>
    <location>
        <position position="62"/>
    </location>
</feature>
<feature type="sequence conflict" description="In Ref. 2; BAE20446." evidence="7" ref="2">
    <original>Q</original>
    <variation>R</variation>
    <location>
        <position position="67"/>
    </location>
</feature>
<feature type="sequence conflict" description="In Ref. 1; AAG00602." evidence="7" ref="1">
    <original>V</original>
    <variation>M</variation>
    <location>
        <position position="538"/>
    </location>
</feature>
<keyword id="KW-0010">Activator</keyword>
<keyword id="KW-0072">Autophagy</keyword>
<keyword id="KW-0963">Cytoplasm</keyword>
<keyword id="KW-0238">DNA-binding</keyword>
<keyword id="KW-1017">Isopeptide bond</keyword>
<keyword id="KW-0479">Metal-binding</keyword>
<keyword id="KW-0539">Nucleus</keyword>
<keyword id="KW-0597">Phosphoprotein</keyword>
<keyword id="KW-1185">Reference proteome</keyword>
<keyword id="KW-0677">Repeat</keyword>
<keyword id="KW-0678">Repressor</keyword>
<keyword id="KW-0804">Transcription</keyword>
<keyword id="KW-0805">Transcription regulation</keyword>
<keyword id="KW-0832">Ubl conjugation</keyword>
<keyword id="KW-0862">Zinc</keyword>
<keyword id="KW-0863">Zinc-finger</keyword>